<gene>
    <name type="primary">yadH</name>
    <name type="ordered locus">SF0125</name>
    <name type="ordered locus">S0127</name>
</gene>
<proteinExistence type="inferred from homology"/>
<keyword id="KW-0997">Cell inner membrane</keyword>
<keyword id="KW-1003">Cell membrane</keyword>
<keyword id="KW-0472">Membrane</keyword>
<keyword id="KW-1185">Reference proteome</keyword>
<keyword id="KW-0812">Transmembrane</keyword>
<keyword id="KW-1133">Transmembrane helix</keyword>
<keyword id="KW-0813">Transport</keyword>
<name>YADH_SHIFL</name>
<sequence>MMHLYWVALKSIWAKEIHRFMRIWVQTLVPPVITMTLYFIIFGNLIGSRIGDMHGFSYMQFIVPGLIMMSVITNAYANVASSFFGAKFQRNIEELLVAPVPTHVIIAGYVGGGVARGLFVGILVTAISLFFVPFQVHSWVFVALTLVLTAVLFSLAGLLNGVFAKTFDDISLVPTFVLTPLTYLGGVFYSLTLLPPFWQGLSHLNPIVYMISGFRYGFLGINDVPLVTTFGVLVVFIVAFYLICWSLIQRGRGLRS</sequence>
<comment type="subcellular location">
    <subcellularLocation>
        <location evidence="1">Cell inner membrane</location>
        <topology evidence="1">Multi-pass membrane protein</topology>
    </subcellularLocation>
</comment>
<comment type="similarity">
    <text evidence="4">Belongs to the ABC-2 integral membrane protein family.</text>
</comment>
<feature type="chain" id="PRO_0000183001" description="Inner membrane transport permease YadH">
    <location>
        <begin position="1"/>
        <end position="256"/>
    </location>
</feature>
<feature type="topological domain" description="Periplasmic" evidence="2">
    <location>
        <begin position="1"/>
        <end position="22"/>
    </location>
</feature>
<feature type="transmembrane region" description="Helical" evidence="2">
    <location>
        <begin position="23"/>
        <end position="43"/>
    </location>
</feature>
<feature type="topological domain" description="Cytoplasmic" evidence="2">
    <location>
        <begin position="44"/>
        <end position="52"/>
    </location>
</feature>
<feature type="transmembrane region" description="Helical" evidence="2">
    <location>
        <begin position="53"/>
        <end position="73"/>
    </location>
</feature>
<feature type="topological domain" description="Periplasmic" evidence="2">
    <location>
        <begin position="74"/>
        <end position="94"/>
    </location>
</feature>
<feature type="transmembrane region" description="Helical" evidence="2">
    <location>
        <begin position="95"/>
        <end position="115"/>
    </location>
</feature>
<feature type="topological domain" description="Cytoplasmic" evidence="2">
    <location>
        <position position="116"/>
    </location>
</feature>
<feature type="transmembrane region" description="Helical" evidence="2">
    <location>
        <begin position="117"/>
        <end position="137"/>
    </location>
</feature>
<feature type="topological domain" description="Periplasmic" evidence="2">
    <location>
        <position position="138"/>
    </location>
</feature>
<feature type="transmembrane region" description="Helical" evidence="2">
    <location>
        <begin position="139"/>
        <end position="159"/>
    </location>
</feature>
<feature type="topological domain" description="Cytoplasmic" evidence="2">
    <location>
        <begin position="160"/>
        <end position="169"/>
    </location>
</feature>
<feature type="transmembrane region" description="Helical" evidence="2">
    <location>
        <begin position="170"/>
        <end position="190"/>
    </location>
</feature>
<feature type="topological domain" description="Periplasmic" evidence="2">
    <location>
        <begin position="191"/>
        <end position="223"/>
    </location>
</feature>
<feature type="transmembrane region" description="Helical" evidence="2">
    <location>
        <begin position="224"/>
        <end position="244"/>
    </location>
</feature>
<feature type="topological domain" description="Cytoplasmic" evidence="2">
    <location>
        <begin position="245"/>
        <end position="256"/>
    </location>
</feature>
<feature type="domain" description="ABC transmembrane type-2" evidence="3">
    <location>
        <begin position="22"/>
        <end position="251"/>
    </location>
</feature>
<protein>
    <recommendedName>
        <fullName>Inner membrane transport permease YadH</fullName>
    </recommendedName>
</protein>
<evidence type="ECO:0000250" key="1"/>
<evidence type="ECO:0000255" key="2"/>
<evidence type="ECO:0000255" key="3">
    <source>
        <dbReference type="PROSITE-ProRule" id="PRU00442"/>
    </source>
</evidence>
<evidence type="ECO:0000305" key="4"/>
<organism>
    <name type="scientific">Shigella flexneri</name>
    <dbReference type="NCBI Taxonomy" id="623"/>
    <lineage>
        <taxon>Bacteria</taxon>
        <taxon>Pseudomonadati</taxon>
        <taxon>Pseudomonadota</taxon>
        <taxon>Gammaproteobacteria</taxon>
        <taxon>Enterobacterales</taxon>
        <taxon>Enterobacteriaceae</taxon>
        <taxon>Shigella</taxon>
    </lineage>
</organism>
<accession>P0AFN9</accession>
<accession>P36880</accession>
<accession>P75657</accession>
<accession>Q8KMY9</accession>
<reference key="1">
    <citation type="journal article" date="2002" name="Nucleic Acids Res.">
        <title>Genome sequence of Shigella flexneri 2a: insights into pathogenicity through comparison with genomes of Escherichia coli K12 and O157.</title>
        <authorList>
            <person name="Jin Q."/>
            <person name="Yuan Z."/>
            <person name="Xu J."/>
            <person name="Wang Y."/>
            <person name="Shen Y."/>
            <person name="Lu W."/>
            <person name="Wang J."/>
            <person name="Liu H."/>
            <person name="Yang J."/>
            <person name="Yang F."/>
            <person name="Zhang X."/>
            <person name="Zhang J."/>
            <person name="Yang G."/>
            <person name="Wu H."/>
            <person name="Qu D."/>
            <person name="Dong J."/>
            <person name="Sun L."/>
            <person name="Xue Y."/>
            <person name="Zhao A."/>
            <person name="Gao Y."/>
            <person name="Zhu J."/>
            <person name="Kan B."/>
            <person name="Ding K."/>
            <person name="Chen S."/>
            <person name="Cheng H."/>
            <person name="Yao Z."/>
            <person name="He B."/>
            <person name="Chen R."/>
            <person name="Ma D."/>
            <person name="Qiang B."/>
            <person name="Wen Y."/>
            <person name="Hou Y."/>
            <person name="Yu J."/>
        </authorList>
    </citation>
    <scope>NUCLEOTIDE SEQUENCE [LARGE SCALE GENOMIC DNA]</scope>
    <source>
        <strain>301 / Serotype 2a</strain>
    </source>
</reference>
<reference key="2">
    <citation type="journal article" date="2003" name="Infect. Immun.">
        <title>Complete genome sequence and comparative genomics of Shigella flexneri serotype 2a strain 2457T.</title>
        <authorList>
            <person name="Wei J."/>
            <person name="Goldberg M.B."/>
            <person name="Burland V."/>
            <person name="Venkatesan M.M."/>
            <person name="Deng W."/>
            <person name="Fournier G."/>
            <person name="Mayhew G.F."/>
            <person name="Plunkett G. III"/>
            <person name="Rose D.J."/>
            <person name="Darling A."/>
            <person name="Mau B."/>
            <person name="Perna N.T."/>
            <person name="Payne S.M."/>
            <person name="Runyen-Janecky L.J."/>
            <person name="Zhou S."/>
            <person name="Schwartz D.C."/>
            <person name="Blattner F.R."/>
        </authorList>
    </citation>
    <scope>NUCLEOTIDE SEQUENCE [LARGE SCALE GENOMIC DNA]</scope>
    <source>
        <strain>ATCC 700930 / 2457T / Serotype 2a</strain>
    </source>
</reference>
<dbReference type="EMBL" id="AE005674">
    <property type="protein sequence ID" value="AAN41788.1"/>
    <property type="molecule type" value="Genomic_DNA"/>
</dbReference>
<dbReference type="EMBL" id="AE014073">
    <property type="protein sequence ID" value="AAP15669.1"/>
    <property type="molecule type" value="Genomic_DNA"/>
</dbReference>
<dbReference type="RefSeq" id="NP_706081.1">
    <property type="nucleotide sequence ID" value="NC_004337.2"/>
</dbReference>
<dbReference type="RefSeq" id="WP_000972203.1">
    <property type="nucleotide sequence ID" value="NZ_WPGW01000007.1"/>
</dbReference>
<dbReference type="SMR" id="P0AFN9"/>
<dbReference type="STRING" id="198214.SF0125"/>
<dbReference type="PaxDb" id="198214-SF0125"/>
<dbReference type="GeneID" id="1024531"/>
<dbReference type="KEGG" id="sfl:SF0125"/>
<dbReference type="KEGG" id="sfx:S0127"/>
<dbReference type="PATRIC" id="fig|198214.7.peg.141"/>
<dbReference type="HOGENOM" id="CLU_039483_3_0_6"/>
<dbReference type="Proteomes" id="UP000001006">
    <property type="component" value="Chromosome"/>
</dbReference>
<dbReference type="Proteomes" id="UP000002673">
    <property type="component" value="Chromosome"/>
</dbReference>
<dbReference type="GO" id="GO:0043190">
    <property type="term" value="C:ATP-binding cassette (ABC) transporter complex"/>
    <property type="evidence" value="ECO:0007669"/>
    <property type="project" value="InterPro"/>
</dbReference>
<dbReference type="GO" id="GO:0140359">
    <property type="term" value="F:ABC-type transporter activity"/>
    <property type="evidence" value="ECO:0007669"/>
    <property type="project" value="InterPro"/>
</dbReference>
<dbReference type="InterPro" id="IPR052522">
    <property type="entry name" value="ABC-2_transport_permease"/>
</dbReference>
<dbReference type="InterPro" id="IPR013525">
    <property type="entry name" value="ABC2_TM"/>
</dbReference>
<dbReference type="InterPro" id="IPR047817">
    <property type="entry name" value="ABC2_TM_bact-type"/>
</dbReference>
<dbReference type="InterPro" id="IPR000412">
    <property type="entry name" value="ABC_2_transport"/>
</dbReference>
<dbReference type="NCBIfam" id="NF011648">
    <property type="entry name" value="PRK15066.1"/>
    <property type="match status" value="1"/>
</dbReference>
<dbReference type="PANTHER" id="PTHR43332:SF2">
    <property type="entry name" value="INNER MEMBRANE TRANSPORT PERMEASE YADH"/>
    <property type="match status" value="1"/>
</dbReference>
<dbReference type="PANTHER" id="PTHR43332">
    <property type="entry name" value="INNER MEMBRANE TRANSPORT PERMEASE YADH-RELATED"/>
    <property type="match status" value="1"/>
</dbReference>
<dbReference type="Pfam" id="PF01061">
    <property type="entry name" value="ABC2_membrane"/>
    <property type="match status" value="1"/>
</dbReference>
<dbReference type="PIRSF" id="PIRSF006648">
    <property type="entry name" value="DrrB"/>
    <property type="match status" value="1"/>
</dbReference>
<dbReference type="PRINTS" id="PR00164">
    <property type="entry name" value="ABC2TRNSPORT"/>
</dbReference>
<dbReference type="PROSITE" id="PS51012">
    <property type="entry name" value="ABC_TM2"/>
    <property type="match status" value="1"/>
</dbReference>